<proteinExistence type="inferred from homology"/>
<gene>
    <name evidence="1" type="primary">UTR4</name>
    <name type="ordered locus">ZYRO0F05236g</name>
</gene>
<accession>C5DXI0</accession>
<keyword id="KW-0028">Amino-acid biosynthesis</keyword>
<keyword id="KW-0963">Cytoplasm</keyword>
<keyword id="KW-0378">Hydrolase</keyword>
<keyword id="KW-0460">Magnesium</keyword>
<keyword id="KW-0479">Metal-binding</keyword>
<keyword id="KW-0486">Methionine biosynthesis</keyword>
<keyword id="KW-0539">Nucleus</keyword>
<keyword id="KW-1185">Reference proteome</keyword>
<comment type="function">
    <text evidence="1">Bifunctional enzyme that catalyzes the enolization of 2,3-diketo-5-methylthiopentyl-1-phosphate (DK-MTP-1-P) into the intermediate 2-hydroxy-3-keto-5-methylthiopentenyl-1-phosphate (HK-MTPenyl-1-P), which is then dephosphorylated to form the acireductone 1,2-dihydroxy-3-keto-5-methylthiopentene (DHK-MTPene).</text>
</comment>
<comment type="catalytic activity">
    <reaction evidence="1">
        <text>5-methylsulfanyl-2,3-dioxopentyl phosphate + H2O = 1,2-dihydroxy-5-(methylsulfanyl)pent-1-en-3-one + phosphate</text>
        <dbReference type="Rhea" id="RHEA:21700"/>
        <dbReference type="ChEBI" id="CHEBI:15377"/>
        <dbReference type="ChEBI" id="CHEBI:43474"/>
        <dbReference type="ChEBI" id="CHEBI:49252"/>
        <dbReference type="ChEBI" id="CHEBI:58828"/>
        <dbReference type="EC" id="3.1.3.77"/>
    </reaction>
</comment>
<comment type="cofactor">
    <cofactor evidence="1">
        <name>Mg(2+)</name>
        <dbReference type="ChEBI" id="CHEBI:18420"/>
    </cofactor>
    <text evidence="1">Binds 1 Mg(2+) ion per subunit.</text>
</comment>
<comment type="pathway">
    <text evidence="1">Amino-acid biosynthesis; L-methionine biosynthesis via salvage pathway; L-methionine from S-methyl-5-thio-alpha-D-ribose 1-phosphate: step 3/6.</text>
</comment>
<comment type="pathway">
    <text evidence="1">Amino-acid biosynthesis; L-methionine biosynthesis via salvage pathway; L-methionine from S-methyl-5-thio-alpha-D-ribose 1-phosphate: step 4/6.</text>
</comment>
<comment type="subunit">
    <text evidence="1">Monomer.</text>
</comment>
<comment type="subcellular location">
    <subcellularLocation>
        <location evidence="1">Cytoplasm</location>
    </subcellularLocation>
    <subcellularLocation>
        <location evidence="1">Nucleus</location>
    </subcellularLocation>
</comment>
<comment type="similarity">
    <text evidence="1">Belongs to the HAD-like hydrolase superfamily. MasA/MtnC family.</text>
</comment>
<protein>
    <recommendedName>
        <fullName evidence="1">Enolase-phosphatase E1</fullName>
        <ecNumber evidence="1">3.1.3.77</ecNumber>
    </recommendedName>
    <alternativeName>
        <fullName evidence="1">2,3-diketo-5-methylthio-1-phosphopentane phosphatase</fullName>
    </alternativeName>
</protein>
<evidence type="ECO:0000255" key="1">
    <source>
        <dbReference type="HAMAP-Rule" id="MF_03117"/>
    </source>
</evidence>
<name>ENOPH_ZYGRC</name>
<sequence length="226" mass="24741">MSVSVYLLDIEGTVCPISFVKETLFPYFSAKLPSLVKSDDVSIKSVLAQFPQHGDSQALQTHIQSLVSNDVKDPTLKQLQGTVWSQGYTSGEIKAPVYKDAIEFMKRKENVYIYSSGSVQAQKLLFGHVANPDNSGSNESSLDLNPLIKGYFDINTSGKKLESSSYEKIVTQIGVAAEQVLFISDNVKELEAAHAAGVKTLLAIRPGNPPVQENHGFRTVEKFDSL</sequence>
<feature type="chain" id="PRO_0000394017" description="Enolase-phosphatase E1">
    <location>
        <begin position="1"/>
        <end position="226"/>
    </location>
</feature>
<feature type="binding site" evidence="1">
    <location>
        <position position="9"/>
    </location>
    <ligand>
        <name>Mg(2+)</name>
        <dbReference type="ChEBI" id="CHEBI:18420"/>
    </ligand>
</feature>
<feature type="binding site" evidence="1">
    <location>
        <position position="11"/>
    </location>
    <ligand>
        <name>Mg(2+)</name>
        <dbReference type="ChEBI" id="CHEBI:18420"/>
    </ligand>
</feature>
<feature type="binding site" evidence="1">
    <location>
        <begin position="115"/>
        <end position="116"/>
    </location>
    <ligand>
        <name>substrate</name>
    </ligand>
</feature>
<feature type="binding site" evidence="1">
    <location>
        <position position="160"/>
    </location>
    <ligand>
        <name>substrate</name>
    </ligand>
</feature>
<feature type="binding site" evidence="1">
    <location>
        <position position="185"/>
    </location>
    <ligand>
        <name>Mg(2+)</name>
        <dbReference type="ChEBI" id="CHEBI:18420"/>
    </ligand>
</feature>
<reference key="1">
    <citation type="journal article" date="2009" name="Genome Res.">
        <title>Comparative genomics of protoploid Saccharomycetaceae.</title>
        <authorList>
            <consortium name="The Genolevures Consortium"/>
            <person name="Souciet J.-L."/>
            <person name="Dujon B."/>
            <person name="Gaillardin C."/>
            <person name="Johnston M."/>
            <person name="Baret P.V."/>
            <person name="Cliften P."/>
            <person name="Sherman D.J."/>
            <person name="Weissenbach J."/>
            <person name="Westhof E."/>
            <person name="Wincker P."/>
            <person name="Jubin C."/>
            <person name="Poulain J."/>
            <person name="Barbe V."/>
            <person name="Segurens B."/>
            <person name="Artiguenave F."/>
            <person name="Anthouard V."/>
            <person name="Vacherie B."/>
            <person name="Val M.-E."/>
            <person name="Fulton R.S."/>
            <person name="Minx P."/>
            <person name="Wilson R."/>
            <person name="Durrens P."/>
            <person name="Jean G."/>
            <person name="Marck C."/>
            <person name="Martin T."/>
            <person name="Nikolski M."/>
            <person name="Rolland T."/>
            <person name="Seret M.-L."/>
            <person name="Casaregola S."/>
            <person name="Despons L."/>
            <person name="Fairhead C."/>
            <person name="Fischer G."/>
            <person name="Lafontaine I."/>
            <person name="Leh V."/>
            <person name="Lemaire M."/>
            <person name="de Montigny J."/>
            <person name="Neuveglise C."/>
            <person name="Thierry A."/>
            <person name="Blanc-Lenfle I."/>
            <person name="Bleykasten C."/>
            <person name="Diffels J."/>
            <person name="Fritsch E."/>
            <person name="Frangeul L."/>
            <person name="Goeffon A."/>
            <person name="Jauniaux N."/>
            <person name="Kachouri-Lafond R."/>
            <person name="Payen C."/>
            <person name="Potier S."/>
            <person name="Pribylova L."/>
            <person name="Ozanne C."/>
            <person name="Richard G.-F."/>
            <person name="Sacerdot C."/>
            <person name="Straub M.-L."/>
            <person name="Talla E."/>
        </authorList>
    </citation>
    <scope>NUCLEOTIDE SEQUENCE [LARGE SCALE GENOMIC DNA]</scope>
    <source>
        <strain>ATCC 2623 / CBS 732 / BCRC 21506 / NBRC 1130 / NCYC 568 / NRRL Y-229</strain>
    </source>
</reference>
<organism>
    <name type="scientific">Zygosaccharomyces rouxii (strain ATCC 2623 / CBS 732 / NBRC 1130 / NCYC 568 / NRRL Y-229)</name>
    <dbReference type="NCBI Taxonomy" id="559307"/>
    <lineage>
        <taxon>Eukaryota</taxon>
        <taxon>Fungi</taxon>
        <taxon>Dikarya</taxon>
        <taxon>Ascomycota</taxon>
        <taxon>Saccharomycotina</taxon>
        <taxon>Saccharomycetes</taxon>
        <taxon>Saccharomycetales</taxon>
        <taxon>Saccharomycetaceae</taxon>
        <taxon>Zygosaccharomyces</taxon>
    </lineage>
</organism>
<dbReference type="EC" id="3.1.3.77" evidence="1"/>
<dbReference type="EMBL" id="CU928178">
    <property type="protein sequence ID" value="CAR28491.1"/>
    <property type="molecule type" value="Genomic_DNA"/>
</dbReference>
<dbReference type="RefSeq" id="XP_002497424.1">
    <property type="nucleotide sequence ID" value="XM_002497379.1"/>
</dbReference>
<dbReference type="SMR" id="C5DXI0"/>
<dbReference type="FunCoup" id="C5DXI0">
    <property type="interactions" value="682"/>
</dbReference>
<dbReference type="STRING" id="559307.C5DXI0"/>
<dbReference type="GeneID" id="8205185"/>
<dbReference type="KEGG" id="zro:ZYRO0F05236g"/>
<dbReference type="HOGENOM" id="CLU_023273_1_1_1"/>
<dbReference type="InParanoid" id="C5DXI0"/>
<dbReference type="UniPathway" id="UPA00904">
    <property type="reaction ID" value="UER00876"/>
</dbReference>
<dbReference type="UniPathway" id="UPA00904">
    <property type="reaction ID" value="UER00877"/>
</dbReference>
<dbReference type="Proteomes" id="UP000008536">
    <property type="component" value="Chromosome F"/>
</dbReference>
<dbReference type="GO" id="GO:0005737">
    <property type="term" value="C:cytoplasm"/>
    <property type="evidence" value="ECO:0007669"/>
    <property type="project" value="UniProtKB-SubCell"/>
</dbReference>
<dbReference type="GO" id="GO:0005634">
    <property type="term" value="C:nucleus"/>
    <property type="evidence" value="ECO:0007669"/>
    <property type="project" value="UniProtKB-SubCell"/>
</dbReference>
<dbReference type="GO" id="GO:0043874">
    <property type="term" value="F:acireductone synthase activity"/>
    <property type="evidence" value="ECO:0007669"/>
    <property type="project" value="UniProtKB-EC"/>
</dbReference>
<dbReference type="GO" id="GO:0000287">
    <property type="term" value="F:magnesium ion binding"/>
    <property type="evidence" value="ECO:0007669"/>
    <property type="project" value="UniProtKB-UniRule"/>
</dbReference>
<dbReference type="GO" id="GO:0019509">
    <property type="term" value="P:L-methionine salvage from methylthioadenosine"/>
    <property type="evidence" value="ECO:0007669"/>
    <property type="project" value="UniProtKB-UniRule"/>
</dbReference>
<dbReference type="CDD" id="cd01629">
    <property type="entry name" value="HAD_EP"/>
    <property type="match status" value="1"/>
</dbReference>
<dbReference type="Gene3D" id="1.10.720.60">
    <property type="match status" value="1"/>
</dbReference>
<dbReference type="Gene3D" id="3.40.50.1000">
    <property type="entry name" value="HAD superfamily/HAD-like"/>
    <property type="match status" value="1"/>
</dbReference>
<dbReference type="HAMAP" id="MF_03117">
    <property type="entry name" value="Salvage_MtnC_euk"/>
    <property type="match status" value="1"/>
</dbReference>
<dbReference type="InterPro" id="IPR023943">
    <property type="entry name" value="Enolase-ppase_E1"/>
</dbReference>
<dbReference type="InterPro" id="IPR027511">
    <property type="entry name" value="ENOPH1_eukaryotes"/>
</dbReference>
<dbReference type="InterPro" id="IPR036412">
    <property type="entry name" value="HAD-like_sf"/>
</dbReference>
<dbReference type="InterPro" id="IPR023214">
    <property type="entry name" value="HAD_sf"/>
</dbReference>
<dbReference type="NCBIfam" id="TIGR01691">
    <property type="entry name" value="enolase-ppase"/>
    <property type="match status" value="1"/>
</dbReference>
<dbReference type="PANTHER" id="PTHR20371">
    <property type="entry name" value="ENOLASE-PHOSPHATASE E1"/>
    <property type="match status" value="1"/>
</dbReference>
<dbReference type="PANTHER" id="PTHR20371:SF1">
    <property type="entry name" value="ENOLASE-PHOSPHATASE E1"/>
    <property type="match status" value="1"/>
</dbReference>
<dbReference type="Pfam" id="PF00702">
    <property type="entry name" value="Hydrolase"/>
    <property type="match status" value="1"/>
</dbReference>
<dbReference type="SFLD" id="SFLDG01133">
    <property type="entry name" value="C1.5.4:_Enolase-phosphatase_Li"/>
    <property type="match status" value="1"/>
</dbReference>
<dbReference type="SFLD" id="SFLDG01129">
    <property type="entry name" value="C1.5:_HAD__Beta-PGM__Phosphata"/>
    <property type="match status" value="1"/>
</dbReference>
<dbReference type="SUPFAM" id="SSF56784">
    <property type="entry name" value="HAD-like"/>
    <property type="match status" value="1"/>
</dbReference>